<dbReference type="EC" id="2.4.2.29" evidence="1"/>
<dbReference type="EMBL" id="CP000885">
    <property type="protein sequence ID" value="ABX43791.1"/>
    <property type="molecule type" value="Genomic_DNA"/>
</dbReference>
<dbReference type="RefSeq" id="WP_012201439.1">
    <property type="nucleotide sequence ID" value="NC_010001.1"/>
</dbReference>
<dbReference type="SMR" id="A9KHU4"/>
<dbReference type="STRING" id="357809.Cphy_3438"/>
<dbReference type="KEGG" id="cpy:Cphy_3438"/>
<dbReference type="eggNOG" id="COG0343">
    <property type="taxonomic scope" value="Bacteria"/>
</dbReference>
<dbReference type="HOGENOM" id="CLU_022060_0_1_9"/>
<dbReference type="OrthoDB" id="9805417at2"/>
<dbReference type="UniPathway" id="UPA00392"/>
<dbReference type="Proteomes" id="UP000000370">
    <property type="component" value="Chromosome"/>
</dbReference>
<dbReference type="GO" id="GO:0005829">
    <property type="term" value="C:cytosol"/>
    <property type="evidence" value="ECO:0007669"/>
    <property type="project" value="TreeGrafter"/>
</dbReference>
<dbReference type="GO" id="GO:0046872">
    <property type="term" value="F:metal ion binding"/>
    <property type="evidence" value="ECO:0007669"/>
    <property type="project" value="UniProtKB-KW"/>
</dbReference>
<dbReference type="GO" id="GO:0008479">
    <property type="term" value="F:tRNA-guanosine(34) queuine transglycosylase activity"/>
    <property type="evidence" value="ECO:0007669"/>
    <property type="project" value="UniProtKB-UniRule"/>
</dbReference>
<dbReference type="GO" id="GO:0008616">
    <property type="term" value="P:queuosine biosynthetic process"/>
    <property type="evidence" value="ECO:0007669"/>
    <property type="project" value="UniProtKB-UniRule"/>
</dbReference>
<dbReference type="GO" id="GO:0002099">
    <property type="term" value="P:tRNA wobble guanine modification"/>
    <property type="evidence" value="ECO:0007669"/>
    <property type="project" value="TreeGrafter"/>
</dbReference>
<dbReference type="GO" id="GO:0101030">
    <property type="term" value="P:tRNA-guanine transglycosylation"/>
    <property type="evidence" value="ECO:0007669"/>
    <property type="project" value="InterPro"/>
</dbReference>
<dbReference type="Gene3D" id="3.20.20.105">
    <property type="entry name" value="Queuine tRNA-ribosyltransferase-like"/>
    <property type="match status" value="1"/>
</dbReference>
<dbReference type="HAMAP" id="MF_00168">
    <property type="entry name" value="Q_tRNA_Tgt"/>
    <property type="match status" value="1"/>
</dbReference>
<dbReference type="InterPro" id="IPR050076">
    <property type="entry name" value="ArchSynthase1/Queuine_TRR"/>
</dbReference>
<dbReference type="InterPro" id="IPR004803">
    <property type="entry name" value="TGT"/>
</dbReference>
<dbReference type="InterPro" id="IPR036511">
    <property type="entry name" value="TGT-like_sf"/>
</dbReference>
<dbReference type="InterPro" id="IPR002616">
    <property type="entry name" value="tRNA_ribo_trans-like"/>
</dbReference>
<dbReference type="NCBIfam" id="TIGR00430">
    <property type="entry name" value="Q_tRNA_tgt"/>
    <property type="match status" value="1"/>
</dbReference>
<dbReference type="NCBIfam" id="TIGR00449">
    <property type="entry name" value="tgt_general"/>
    <property type="match status" value="1"/>
</dbReference>
<dbReference type="PANTHER" id="PTHR46499">
    <property type="entry name" value="QUEUINE TRNA-RIBOSYLTRANSFERASE"/>
    <property type="match status" value="1"/>
</dbReference>
<dbReference type="PANTHER" id="PTHR46499:SF1">
    <property type="entry name" value="QUEUINE TRNA-RIBOSYLTRANSFERASE"/>
    <property type="match status" value="1"/>
</dbReference>
<dbReference type="Pfam" id="PF01702">
    <property type="entry name" value="TGT"/>
    <property type="match status" value="1"/>
</dbReference>
<dbReference type="SUPFAM" id="SSF51713">
    <property type="entry name" value="tRNA-guanine transglycosylase"/>
    <property type="match status" value="1"/>
</dbReference>
<protein>
    <recommendedName>
        <fullName evidence="1">Queuine tRNA-ribosyltransferase</fullName>
        <ecNumber evidence="1">2.4.2.29</ecNumber>
    </recommendedName>
    <alternativeName>
        <fullName evidence="1">Guanine insertion enzyme</fullName>
    </alternativeName>
    <alternativeName>
        <fullName evidence="1">tRNA-guanine transglycosylase</fullName>
    </alternativeName>
</protein>
<keyword id="KW-0328">Glycosyltransferase</keyword>
<keyword id="KW-0479">Metal-binding</keyword>
<keyword id="KW-0671">Queuosine biosynthesis</keyword>
<keyword id="KW-1185">Reference proteome</keyword>
<keyword id="KW-0808">Transferase</keyword>
<keyword id="KW-0819">tRNA processing</keyword>
<keyword id="KW-0862">Zinc</keyword>
<accession>A9KHU4</accession>
<sequence length="378" mass="42718">MYKLICKDGNAKRGEFTTVHGKIQTPVFMNVGTAAAIKGAVSTMDLQEIGTQVELSNTYHLHVRPGDEVVKKLGGLHKFMVWDKPILTDSGGFQVFSLAGLRKIKEEGVYFNSHIDGKKIFMGPEESMRIQSNLASTIAMAFDECPPHPATREYMEDSVARTTRWLLRCKNEMNRLNTLEDTINKHQMLFGINQGGTYTDIRVEHAKRISELDLDGYALGGLAVGESHSEMYRIIEETVPYLPEAKPTYLMGVGTPANILEAVERGVDFFDCVYPARNGRHGHAYTNHGKMNLLNAKYELDDRPIEEGCGCPVCKNYSRGYIRHLLKAKEMLGLRFLVTHNLYFYNKMMEEIREAIENQNFASYKKKKLEGFAAEQGN</sequence>
<proteinExistence type="inferred from homology"/>
<evidence type="ECO:0000255" key="1">
    <source>
        <dbReference type="HAMAP-Rule" id="MF_00168"/>
    </source>
</evidence>
<organism>
    <name type="scientific">Lachnoclostridium phytofermentans (strain ATCC 700394 / DSM 18823 / ISDg)</name>
    <name type="common">Clostridium phytofermentans</name>
    <dbReference type="NCBI Taxonomy" id="357809"/>
    <lineage>
        <taxon>Bacteria</taxon>
        <taxon>Bacillati</taxon>
        <taxon>Bacillota</taxon>
        <taxon>Clostridia</taxon>
        <taxon>Lachnospirales</taxon>
        <taxon>Lachnospiraceae</taxon>
    </lineage>
</organism>
<gene>
    <name evidence="1" type="primary">tgt</name>
    <name type="ordered locus">Cphy_3438</name>
</gene>
<feature type="chain" id="PRO_1000077002" description="Queuine tRNA-ribosyltransferase">
    <location>
        <begin position="1"/>
        <end position="378"/>
    </location>
</feature>
<feature type="region of interest" description="RNA binding" evidence="1">
    <location>
        <begin position="252"/>
        <end position="258"/>
    </location>
</feature>
<feature type="region of interest" description="RNA binding; important for wobble base 34 recognition" evidence="1">
    <location>
        <begin position="276"/>
        <end position="280"/>
    </location>
</feature>
<feature type="active site" description="Proton acceptor" evidence="1">
    <location>
        <position position="89"/>
    </location>
</feature>
<feature type="active site" description="Nucleophile" evidence="1">
    <location>
        <position position="271"/>
    </location>
</feature>
<feature type="binding site" evidence="1">
    <location>
        <begin position="89"/>
        <end position="93"/>
    </location>
    <ligand>
        <name>substrate</name>
    </ligand>
</feature>
<feature type="binding site" evidence="1">
    <location>
        <position position="143"/>
    </location>
    <ligand>
        <name>substrate</name>
    </ligand>
</feature>
<feature type="binding site" evidence="1">
    <location>
        <position position="194"/>
    </location>
    <ligand>
        <name>substrate</name>
    </ligand>
</feature>
<feature type="binding site" evidence="1">
    <location>
        <position position="221"/>
    </location>
    <ligand>
        <name>substrate</name>
    </ligand>
</feature>
<feature type="binding site" evidence="1">
    <location>
        <position position="309"/>
    </location>
    <ligand>
        <name>Zn(2+)</name>
        <dbReference type="ChEBI" id="CHEBI:29105"/>
    </ligand>
</feature>
<feature type="binding site" evidence="1">
    <location>
        <position position="311"/>
    </location>
    <ligand>
        <name>Zn(2+)</name>
        <dbReference type="ChEBI" id="CHEBI:29105"/>
    </ligand>
</feature>
<feature type="binding site" evidence="1">
    <location>
        <position position="314"/>
    </location>
    <ligand>
        <name>Zn(2+)</name>
        <dbReference type="ChEBI" id="CHEBI:29105"/>
    </ligand>
</feature>
<feature type="binding site" evidence="1">
    <location>
        <position position="340"/>
    </location>
    <ligand>
        <name>Zn(2+)</name>
        <dbReference type="ChEBI" id="CHEBI:29105"/>
    </ligand>
</feature>
<comment type="function">
    <text evidence="1">Catalyzes the base-exchange of a guanine (G) residue with the queuine precursor 7-aminomethyl-7-deazaguanine (PreQ1) at position 34 (anticodon wobble position) in tRNAs with GU(N) anticodons (tRNA-Asp, -Asn, -His and -Tyr). Catalysis occurs through a double-displacement mechanism. The nucleophile active site attacks the C1' of nucleotide 34 to detach the guanine base from the RNA, forming a covalent enzyme-RNA intermediate. The proton acceptor active site deprotonates the incoming PreQ1, allowing a nucleophilic attack on the C1' of the ribose to form the product. After dissociation, two additional enzymatic reactions on the tRNA convert PreQ1 to queuine (Q), resulting in the hypermodified nucleoside queuosine (7-(((4,5-cis-dihydroxy-2-cyclopenten-1-yl)amino)methyl)-7-deazaguanosine).</text>
</comment>
<comment type="catalytic activity">
    <reaction evidence="1">
        <text>7-aminomethyl-7-carbaguanine + guanosine(34) in tRNA = 7-aminomethyl-7-carbaguanosine(34) in tRNA + guanine</text>
        <dbReference type="Rhea" id="RHEA:24104"/>
        <dbReference type="Rhea" id="RHEA-COMP:10341"/>
        <dbReference type="Rhea" id="RHEA-COMP:10342"/>
        <dbReference type="ChEBI" id="CHEBI:16235"/>
        <dbReference type="ChEBI" id="CHEBI:58703"/>
        <dbReference type="ChEBI" id="CHEBI:74269"/>
        <dbReference type="ChEBI" id="CHEBI:82833"/>
        <dbReference type="EC" id="2.4.2.29"/>
    </reaction>
</comment>
<comment type="cofactor">
    <cofactor evidence="1">
        <name>Zn(2+)</name>
        <dbReference type="ChEBI" id="CHEBI:29105"/>
    </cofactor>
    <text evidence="1">Binds 1 zinc ion per subunit.</text>
</comment>
<comment type="pathway">
    <text evidence="1">tRNA modification; tRNA-queuosine biosynthesis.</text>
</comment>
<comment type="subunit">
    <text evidence="1">Homodimer. Within each dimer, one monomer is responsible for RNA recognition and catalysis, while the other monomer binds to the replacement base PreQ1.</text>
</comment>
<comment type="similarity">
    <text evidence="1">Belongs to the queuine tRNA-ribosyltransferase family.</text>
</comment>
<name>TGT_LACP7</name>
<reference key="1">
    <citation type="submission" date="2007-11" db="EMBL/GenBank/DDBJ databases">
        <title>Complete genome sequence of Clostridium phytofermentans ISDg.</title>
        <authorList>
            <person name="Leschine S.B."/>
            <person name="Warnick T.A."/>
            <person name="Blanchard J.L."/>
            <person name="Schnell D.J."/>
            <person name="Petit E.L."/>
            <person name="LaTouf W.G."/>
            <person name="Copeland A."/>
            <person name="Lucas S."/>
            <person name="Lapidus A."/>
            <person name="Barry K."/>
            <person name="Glavina del Rio T."/>
            <person name="Dalin E."/>
            <person name="Tice H."/>
            <person name="Pitluck S."/>
            <person name="Kiss H."/>
            <person name="Brettin T."/>
            <person name="Bruce D."/>
            <person name="Detter J.C."/>
            <person name="Han C."/>
            <person name="Kuske C."/>
            <person name="Schmutz J."/>
            <person name="Larimer F."/>
            <person name="Land M."/>
            <person name="Hauser L."/>
            <person name="Kyrpides N."/>
            <person name="Kim E.A."/>
            <person name="Richardson P."/>
        </authorList>
    </citation>
    <scope>NUCLEOTIDE SEQUENCE [LARGE SCALE GENOMIC DNA]</scope>
    <source>
        <strain>ATCC 700394 / DSM 18823 / ISDg</strain>
    </source>
</reference>